<protein>
    <recommendedName>
        <fullName>Metallothionein</fullName>
        <shortName>MT</shortName>
    </recommendedName>
</protein>
<feature type="chain" id="PRO_0000197257" description="Metallothionein">
    <location>
        <begin position="1"/>
        <end position="61"/>
    </location>
</feature>
<feature type="region of interest" description="Beta">
    <location>
        <begin position="1"/>
        <end position="29"/>
    </location>
</feature>
<feature type="region of interest" description="Alpha">
    <location>
        <begin position="30"/>
        <end position="61"/>
    </location>
</feature>
<feature type="binding site" evidence="2">
    <location>
        <position position="5"/>
    </location>
    <ligand>
        <name>a divalent metal cation</name>
        <dbReference type="ChEBI" id="CHEBI:60240"/>
        <label>1</label>
        <note>in cluster B</note>
    </ligand>
</feature>
<feature type="binding site" evidence="2">
    <location>
        <position position="7"/>
    </location>
    <ligand>
        <name>a divalent metal cation</name>
        <dbReference type="ChEBI" id="CHEBI:60240"/>
        <label>1</label>
        <note>in cluster B</note>
    </ligand>
</feature>
<feature type="binding site" evidence="2">
    <location>
        <position position="7"/>
    </location>
    <ligand>
        <name>a divalent metal cation</name>
        <dbReference type="ChEBI" id="CHEBI:60240"/>
        <label>2</label>
        <note>in cluster B</note>
    </ligand>
</feature>
<feature type="binding site" evidence="2">
    <location>
        <position position="13"/>
    </location>
    <ligand>
        <name>a divalent metal cation</name>
        <dbReference type="ChEBI" id="CHEBI:60240"/>
        <label>2</label>
        <note>in cluster B</note>
    </ligand>
</feature>
<feature type="binding site" evidence="2">
    <location>
        <position position="15"/>
    </location>
    <ligand>
        <name>a divalent metal cation</name>
        <dbReference type="ChEBI" id="CHEBI:60240"/>
        <label>2</label>
        <note>in cluster B</note>
    </ligand>
</feature>
<feature type="binding site" evidence="2">
    <location>
        <position position="15"/>
    </location>
    <ligand>
        <name>a divalent metal cation</name>
        <dbReference type="ChEBI" id="CHEBI:60240"/>
        <label>3</label>
        <note>in cluster B</note>
    </ligand>
</feature>
<feature type="binding site" evidence="2">
    <location>
        <position position="19"/>
    </location>
    <ligand>
        <name>a divalent metal cation</name>
        <dbReference type="ChEBI" id="CHEBI:60240"/>
        <label>3</label>
        <note>in cluster B</note>
    </ligand>
</feature>
<feature type="binding site" evidence="2">
    <location>
        <position position="21"/>
    </location>
    <ligand>
        <name>a divalent metal cation</name>
        <dbReference type="ChEBI" id="CHEBI:60240"/>
        <label>1</label>
        <note>in cluster B</note>
    </ligand>
</feature>
<feature type="binding site" evidence="2">
    <location>
        <position position="24"/>
    </location>
    <ligand>
        <name>a divalent metal cation</name>
        <dbReference type="ChEBI" id="CHEBI:60240"/>
        <label>1</label>
        <note>in cluster B</note>
    </ligand>
</feature>
<feature type="binding site" evidence="2">
    <location>
        <position position="24"/>
    </location>
    <ligand>
        <name>a divalent metal cation</name>
        <dbReference type="ChEBI" id="CHEBI:60240"/>
        <label>3</label>
        <note>in cluster B</note>
    </ligand>
</feature>
<feature type="binding site" evidence="2">
    <location>
        <position position="26"/>
    </location>
    <ligand>
        <name>a divalent metal cation</name>
        <dbReference type="ChEBI" id="CHEBI:60240"/>
        <label>2</label>
        <note>in cluster B</note>
    </ligand>
</feature>
<feature type="binding site" evidence="2">
    <location>
        <position position="29"/>
    </location>
    <ligand>
        <name>a divalent metal cation</name>
        <dbReference type="ChEBI" id="CHEBI:60240"/>
        <label>3</label>
        <note>in cluster B</note>
    </ligand>
</feature>
<feature type="binding site" evidence="2">
    <location>
        <position position="33"/>
    </location>
    <ligand>
        <name>a divalent metal cation</name>
        <dbReference type="ChEBI" id="CHEBI:60240"/>
        <label>4</label>
        <note>in cluster A</note>
    </ligand>
</feature>
<feature type="binding site" evidence="2">
    <location>
        <position position="34"/>
    </location>
    <ligand>
        <name>a divalent metal cation</name>
        <dbReference type="ChEBI" id="CHEBI:60240"/>
        <label>4</label>
        <note>in cluster A</note>
    </ligand>
</feature>
<feature type="binding site" evidence="2">
    <location>
        <position position="34"/>
    </location>
    <ligand>
        <name>a divalent metal cation</name>
        <dbReference type="ChEBI" id="CHEBI:60240"/>
        <label>5</label>
        <note>in cluster A</note>
    </ligand>
</feature>
<feature type="binding site" evidence="2">
    <location>
        <position position="36"/>
    </location>
    <ligand>
        <name>a divalent metal cation</name>
        <dbReference type="ChEBI" id="CHEBI:60240"/>
        <label>5</label>
        <note>in cluster A</note>
    </ligand>
</feature>
<feature type="binding site" evidence="2">
    <location>
        <position position="37"/>
    </location>
    <ligand>
        <name>a divalent metal cation</name>
        <dbReference type="ChEBI" id="CHEBI:60240"/>
        <label>5</label>
        <note>in cluster A</note>
    </ligand>
</feature>
<feature type="binding site" evidence="2">
    <location>
        <position position="37"/>
    </location>
    <ligand>
        <name>a divalent metal cation</name>
        <dbReference type="ChEBI" id="CHEBI:60240"/>
        <label>6</label>
        <note>in cluster A</note>
    </ligand>
</feature>
<feature type="binding site" evidence="2">
    <location>
        <position position="41"/>
    </location>
    <ligand>
        <name>a divalent metal cation</name>
        <dbReference type="ChEBI" id="CHEBI:60240"/>
        <label>6</label>
        <note>in cluster A</note>
    </ligand>
</feature>
<feature type="binding site" evidence="2">
    <location>
        <position position="44"/>
    </location>
    <ligand>
        <name>a divalent metal cation</name>
        <dbReference type="ChEBI" id="CHEBI:60240"/>
        <label>4</label>
        <note>in cluster A</note>
    </ligand>
</feature>
<feature type="binding site" evidence="2">
    <location>
        <position position="44"/>
    </location>
    <ligand>
        <name>a divalent metal cation</name>
        <dbReference type="ChEBI" id="CHEBI:60240"/>
        <label>6</label>
        <note>in cluster A</note>
    </ligand>
</feature>
<feature type="binding site" evidence="2">
    <location>
        <position position="48"/>
    </location>
    <ligand>
        <name>a divalent metal cation</name>
        <dbReference type="ChEBI" id="CHEBI:60240"/>
        <label>4</label>
        <note>in cluster A</note>
    </ligand>
</feature>
<feature type="binding site" evidence="2">
    <location>
        <position position="50"/>
    </location>
    <ligand>
        <name>a divalent metal cation</name>
        <dbReference type="ChEBI" id="CHEBI:60240"/>
        <label>5</label>
        <note>in cluster A</note>
    </ligand>
</feature>
<feature type="binding site" evidence="2">
    <location>
        <position position="50"/>
    </location>
    <ligand>
        <name>a divalent metal cation</name>
        <dbReference type="ChEBI" id="CHEBI:60240"/>
        <label>7</label>
        <note>in cluster A</note>
    </ligand>
</feature>
<feature type="binding site" evidence="2">
    <location>
        <position position="57"/>
    </location>
    <ligand>
        <name>a divalent metal cation</name>
        <dbReference type="ChEBI" id="CHEBI:60240"/>
        <label>7</label>
        <note>in cluster A</note>
    </ligand>
</feature>
<feature type="binding site" evidence="2">
    <location>
        <position position="59"/>
    </location>
    <ligand>
        <name>a divalent metal cation</name>
        <dbReference type="ChEBI" id="CHEBI:60240"/>
        <label>7</label>
        <note>in cluster A</note>
    </ligand>
</feature>
<feature type="binding site" evidence="2">
    <location>
        <position position="60"/>
    </location>
    <ligand>
        <name>a divalent metal cation</name>
        <dbReference type="ChEBI" id="CHEBI:60240"/>
        <label>6</label>
        <note>in cluster A</note>
    </ligand>
</feature>
<feature type="binding site" evidence="2">
    <location>
        <position position="60"/>
    </location>
    <ligand>
        <name>a divalent metal cation</name>
        <dbReference type="ChEBI" id="CHEBI:60240"/>
        <label>7</label>
        <note>in cluster A</note>
    </ligand>
</feature>
<feature type="modified residue" description="N-acetylmethionine" evidence="3">
    <location>
        <position position="1"/>
    </location>
</feature>
<comment type="function">
    <text evidence="1">Metallothioneins have a high content of cysteine residues that bind various heavy metals.</text>
</comment>
<comment type="subunit">
    <text evidence="1">Monomer.</text>
</comment>
<comment type="domain">
    <text>Class I metallothioneins contain 2 metal-binding domains: four divalent ions are chelated within cluster A of the alpha domain and are coordinated via cysteinyl thiolate bridges to 11 cysteine ligands. Cluster B, the corresponding region within the beta domain, can ligate three divalent ions to 9 cysteines.</text>
</comment>
<comment type="similarity">
    <text evidence="4">Belongs to the metallothionein superfamily. Type 1 family.</text>
</comment>
<accession>O18842</accession>
<reference key="1">
    <citation type="submission" date="1997-08" db="EMBL/GenBank/DDBJ databases">
        <authorList>
            <person name="Kaysen J."/>
            <person name="O'Hara T."/>
            <person name="Goodwin T."/>
            <person name="Linnehan R."/>
            <person name="Hammond T."/>
        </authorList>
    </citation>
    <scope>NUCLEOTIDE SEQUENCE [MRNA]</scope>
    <source>
        <tissue>Liver</tissue>
    </source>
</reference>
<name>MT_BALMY</name>
<organism>
    <name type="scientific">Balaena mysticetus</name>
    <name type="common">Bowhead whale</name>
    <dbReference type="NCBI Taxonomy" id="27602"/>
    <lineage>
        <taxon>Eukaryota</taxon>
        <taxon>Metazoa</taxon>
        <taxon>Chordata</taxon>
        <taxon>Craniata</taxon>
        <taxon>Vertebrata</taxon>
        <taxon>Euteleostomi</taxon>
        <taxon>Mammalia</taxon>
        <taxon>Eutheria</taxon>
        <taxon>Laurasiatheria</taxon>
        <taxon>Artiodactyla</taxon>
        <taxon>Whippomorpha</taxon>
        <taxon>Cetacea</taxon>
        <taxon>Mysticeti</taxon>
        <taxon>Balaenidae</taxon>
        <taxon>Balaena</taxon>
    </lineage>
</organism>
<keyword id="KW-0007">Acetylation</keyword>
<keyword id="KW-0479">Metal-binding</keyword>
<keyword id="KW-0480">Metal-thiolate cluster</keyword>
<sequence length="61" mass="6025">MDPNCSCAAGGSCTCAGSCKCKECKCTSCKKSCCSCCPPGCTKCAQGCVCKGASDKCNCCA</sequence>
<proteinExistence type="inferred from homology"/>
<dbReference type="EMBL" id="AF022117">
    <property type="protein sequence ID" value="AAB72006.1"/>
    <property type="molecule type" value="mRNA"/>
</dbReference>
<dbReference type="SMR" id="O18842"/>
<dbReference type="GO" id="GO:0005737">
    <property type="term" value="C:cytoplasm"/>
    <property type="evidence" value="ECO:0000250"/>
    <property type="project" value="UniProtKB"/>
</dbReference>
<dbReference type="GO" id="GO:0005634">
    <property type="term" value="C:nucleus"/>
    <property type="evidence" value="ECO:0000250"/>
    <property type="project" value="UniProtKB"/>
</dbReference>
<dbReference type="GO" id="GO:0008270">
    <property type="term" value="F:zinc ion binding"/>
    <property type="evidence" value="ECO:0000250"/>
    <property type="project" value="UniProtKB"/>
</dbReference>
<dbReference type="GO" id="GO:0071276">
    <property type="term" value="P:cellular response to cadmium ion"/>
    <property type="evidence" value="ECO:0007669"/>
    <property type="project" value="TreeGrafter"/>
</dbReference>
<dbReference type="GO" id="GO:0071280">
    <property type="term" value="P:cellular response to copper ion"/>
    <property type="evidence" value="ECO:0007669"/>
    <property type="project" value="TreeGrafter"/>
</dbReference>
<dbReference type="GO" id="GO:0071294">
    <property type="term" value="P:cellular response to zinc ion"/>
    <property type="evidence" value="ECO:0000250"/>
    <property type="project" value="UniProtKB"/>
</dbReference>
<dbReference type="GO" id="GO:0010273">
    <property type="term" value="P:detoxification of copper ion"/>
    <property type="evidence" value="ECO:0007669"/>
    <property type="project" value="TreeGrafter"/>
</dbReference>
<dbReference type="GO" id="GO:0006882">
    <property type="term" value="P:intracellular zinc ion homeostasis"/>
    <property type="evidence" value="ECO:0007669"/>
    <property type="project" value="TreeGrafter"/>
</dbReference>
<dbReference type="GO" id="GO:0045926">
    <property type="term" value="P:negative regulation of growth"/>
    <property type="evidence" value="ECO:0000250"/>
    <property type="project" value="UniProtKB"/>
</dbReference>
<dbReference type="FunFam" id="4.10.10.10:FF:000001">
    <property type="entry name" value="Metallothionein"/>
    <property type="match status" value="1"/>
</dbReference>
<dbReference type="Gene3D" id="4.10.10.10">
    <property type="entry name" value="Metallothionein Isoform II"/>
    <property type="match status" value="1"/>
</dbReference>
<dbReference type="InterPro" id="IPR017854">
    <property type="entry name" value="Metalthion_dom_sf"/>
</dbReference>
<dbReference type="InterPro" id="IPR023587">
    <property type="entry name" value="Metalthion_dom_sf_vert"/>
</dbReference>
<dbReference type="InterPro" id="IPR000006">
    <property type="entry name" value="Metalthion_vert"/>
</dbReference>
<dbReference type="InterPro" id="IPR018064">
    <property type="entry name" value="Metalthion_vert_metal_BS"/>
</dbReference>
<dbReference type="PANTHER" id="PTHR23299">
    <property type="entry name" value="METALLOTHIONEIN"/>
    <property type="match status" value="1"/>
</dbReference>
<dbReference type="PANTHER" id="PTHR23299:SF22">
    <property type="entry name" value="METALLOTHIONEIN-1G"/>
    <property type="match status" value="1"/>
</dbReference>
<dbReference type="Pfam" id="PF00131">
    <property type="entry name" value="Metallothio"/>
    <property type="match status" value="1"/>
</dbReference>
<dbReference type="PRINTS" id="PR00860">
    <property type="entry name" value="MTVERTEBRATE"/>
</dbReference>
<dbReference type="SUPFAM" id="SSF57868">
    <property type="entry name" value="Metallothionein"/>
    <property type="match status" value="1"/>
</dbReference>
<dbReference type="PROSITE" id="PS00203">
    <property type="entry name" value="METALLOTHIONEIN_VRT"/>
    <property type="match status" value="1"/>
</dbReference>
<evidence type="ECO:0000250" key="1"/>
<evidence type="ECO:0000250" key="2">
    <source>
        <dbReference type="UniProtKB" id="P02795"/>
    </source>
</evidence>
<evidence type="ECO:0000250" key="3">
    <source>
        <dbReference type="UniProtKB" id="P68301"/>
    </source>
</evidence>
<evidence type="ECO:0000305" key="4"/>